<protein>
    <recommendedName>
        <fullName evidence="1">Phosphoribosylformylglycinamidine synthase subunit PurL</fullName>
        <shortName evidence="1">FGAM synthase</shortName>
        <ecNumber evidence="1">6.3.5.3</ecNumber>
    </recommendedName>
    <alternativeName>
        <fullName evidence="1">Formylglycinamide ribonucleotide amidotransferase subunit II</fullName>
        <shortName evidence="1">FGAR amidotransferase II</shortName>
        <shortName evidence="1">FGAR-AT II</shortName>
    </alternativeName>
    <alternativeName>
        <fullName evidence="1">Glutamine amidotransferase PurL</fullName>
    </alternativeName>
    <alternativeName>
        <fullName evidence="1">Phosphoribosylformylglycinamidine synthase subunit II</fullName>
    </alternativeName>
</protein>
<accession>Q81ZH2</accession>
<accession>Q6I4B9</accession>
<accession>Q6KY21</accession>
<feature type="chain" id="PRO_0000100432" description="Phosphoribosylformylglycinamidine synthase subunit PurL">
    <location>
        <begin position="1"/>
        <end position="739"/>
    </location>
</feature>
<feature type="active site" evidence="1">
    <location>
        <position position="54"/>
    </location>
</feature>
<feature type="active site" description="Proton acceptor" evidence="1">
    <location>
        <position position="100"/>
    </location>
</feature>
<feature type="binding site" evidence="1">
    <location>
        <position position="57"/>
    </location>
    <ligand>
        <name>ATP</name>
        <dbReference type="ChEBI" id="CHEBI:30616"/>
    </ligand>
</feature>
<feature type="binding site" evidence="1">
    <location>
        <position position="96"/>
    </location>
    <ligand>
        <name>ATP</name>
        <dbReference type="ChEBI" id="CHEBI:30616"/>
    </ligand>
</feature>
<feature type="binding site" evidence="1">
    <location>
        <position position="98"/>
    </location>
    <ligand>
        <name>Mg(2+)</name>
        <dbReference type="ChEBI" id="CHEBI:18420"/>
        <label>1</label>
    </ligand>
</feature>
<feature type="binding site" evidence="1">
    <location>
        <begin position="99"/>
        <end position="102"/>
    </location>
    <ligand>
        <name>substrate</name>
    </ligand>
</feature>
<feature type="binding site" evidence="1">
    <location>
        <position position="121"/>
    </location>
    <ligand>
        <name>substrate</name>
    </ligand>
</feature>
<feature type="binding site" evidence="1">
    <location>
        <position position="122"/>
    </location>
    <ligand>
        <name>Mg(2+)</name>
        <dbReference type="ChEBI" id="CHEBI:18420"/>
        <label>2</label>
    </ligand>
</feature>
<feature type="binding site" evidence="1">
    <location>
        <position position="245"/>
    </location>
    <ligand>
        <name>substrate</name>
    </ligand>
</feature>
<feature type="binding site" evidence="1">
    <location>
        <position position="273"/>
    </location>
    <ligand>
        <name>Mg(2+)</name>
        <dbReference type="ChEBI" id="CHEBI:18420"/>
        <label>2</label>
    </ligand>
</feature>
<feature type="binding site" evidence="1">
    <location>
        <begin position="317"/>
        <end position="319"/>
    </location>
    <ligand>
        <name>substrate</name>
    </ligand>
</feature>
<feature type="binding site" evidence="1">
    <location>
        <position position="500"/>
    </location>
    <ligand>
        <name>ATP</name>
        <dbReference type="ChEBI" id="CHEBI:30616"/>
    </ligand>
</feature>
<feature type="binding site" evidence="1">
    <location>
        <position position="537"/>
    </location>
    <ligand>
        <name>ATP</name>
        <dbReference type="ChEBI" id="CHEBI:30616"/>
    </ligand>
</feature>
<feature type="binding site" evidence="1">
    <location>
        <position position="538"/>
    </location>
    <ligand>
        <name>Mg(2+)</name>
        <dbReference type="ChEBI" id="CHEBI:18420"/>
        <label>1</label>
    </ligand>
</feature>
<feature type="binding site" evidence="1">
    <location>
        <position position="540"/>
    </location>
    <ligand>
        <name>substrate</name>
    </ligand>
</feature>
<name>PURL_BACAN</name>
<organism>
    <name type="scientific">Bacillus anthracis</name>
    <dbReference type="NCBI Taxonomy" id="1392"/>
    <lineage>
        <taxon>Bacteria</taxon>
        <taxon>Bacillati</taxon>
        <taxon>Bacillota</taxon>
        <taxon>Bacilli</taxon>
        <taxon>Bacillales</taxon>
        <taxon>Bacillaceae</taxon>
        <taxon>Bacillus</taxon>
        <taxon>Bacillus cereus group</taxon>
    </lineage>
</organism>
<sequence length="739" mass="80175">MSLMLEPNPTQIKEERIYAEMGLTDEEFAMVEKILGRLPNYTETGLFSVMWSEHCSYKNSKPVLRKFPTTGERVLQGPGEGAGIVDIGDNQAVVFKMESHNHPSAIEPYQGAATGVGGIIRDVFSMGARPVALLNSLRFGELQSPRVKYLFEEVVAGIAGYGNCIGIPTVGGEVQFDPCYEGNPLVNAMCVGLINHEDIKKGQAHGAGNTVMYVGASTGRDGIHGATFASEELSESSEAKRPAVQVGDPFMEKLLIEACLELIQSDALVGIQDMGAAGLTSSSAEMASKAGMGIEMYLDDVPQRETGMTPYEMMLSESQERMLIVVKKGREQEIVDLFEKYGLAAVTMGKVTEDKMLRLFHKGEMVAEVPADALAEEAPIYHKPSKEAAYFAEFQQMKMETPKVENYKETLFALLQQPTIASKEWVYDQYDYQVRTSTVVTPGSDAAVVRVRGTEKGLAMTTDCNSRYIYLDPEVGGKIAVAEAARNIVCSGGEPLAITDCLNFGNPEKPEIFWQIEKSVDGMSEACRTLQTPVIGGNVSMYNERSGEAVYPTPTVGMVGLVHDLKHVTTQEFKQAGDLVYVIGETKAEFGGSELQKMLHGKIFGQSPSIDLDVELKRQKQVLAAIQAGLVQSAHDVAEGGLAVAISESAIGANGLGATVKLDGEATAALFAESQSRFVITVKRENKEAFEKAVEAIQVGEVTNTNEVTIHNEENEVLLTANVDEMRKAWKGAIPCLLK</sequence>
<evidence type="ECO:0000255" key="1">
    <source>
        <dbReference type="HAMAP-Rule" id="MF_00420"/>
    </source>
</evidence>
<keyword id="KW-0067">ATP-binding</keyword>
<keyword id="KW-0963">Cytoplasm</keyword>
<keyword id="KW-0436">Ligase</keyword>
<keyword id="KW-0460">Magnesium</keyword>
<keyword id="KW-0479">Metal-binding</keyword>
<keyword id="KW-0547">Nucleotide-binding</keyword>
<keyword id="KW-0658">Purine biosynthesis</keyword>
<keyword id="KW-1185">Reference proteome</keyword>
<proteinExistence type="inferred from homology"/>
<gene>
    <name evidence="1" type="primary">purL</name>
    <name type="ordered locus">BA_0294</name>
    <name type="ordered locus">GBAA_0294</name>
    <name type="ordered locus">BAS0281</name>
</gene>
<dbReference type="EC" id="6.3.5.3" evidence="1"/>
<dbReference type="EMBL" id="AE016879">
    <property type="protein sequence ID" value="AAP24330.1"/>
    <property type="molecule type" value="Genomic_DNA"/>
</dbReference>
<dbReference type="EMBL" id="AE017334">
    <property type="protein sequence ID" value="AAT29381.1"/>
    <property type="molecule type" value="Genomic_DNA"/>
</dbReference>
<dbReference type="EMBL" id="AE017225">
    <property type="protein sequence ID" value="AAT52612.1"/>
    <property type="molecule type" value="Genomic_DNA"/>
</dbReference>
<dbReference type="RefSeq" id="NP_842844.1">
    <property type="nucleotide sequence ID" value="NC_003997.3"/>
</dbReference>
<dbReference type="RefSeq" id="WP_000055577.1">
    <property type="nucleotide sequence ID" value="NZ_WXXJ01000007.1"/>
</dbReference>
<dbReference type="RefSeq" id="YP_026561.1">
    <property type="nucleotide sequence ID" value="NC_005945.1"/>
</dbReference>
<dbReference type="SMR" id="Q81ZH2"/>
<dbReference type="STRING" id="261594.GBAA_0294"/>
<dbReference type="DNASU" id="1085313"/>
<dbReference type="GeneID" id="45020353"/>
<dbReference type="KEGG" id="ban:BA_0294"/>
<dbReference type="KEGG" id="bar:GBAA_0294"/>
<dbReference type="KEGG" id="bat:BAS0281"/>
<dbReference type="PATRIC" id="fig|198094.11.peg.285"/>
<dbReference type="eggNOG" id="COG0046">
    <property type="taxonomic scope" value="Bacteria"/>
</dbReference>
<dbReference type="HOGENOM" id="CLU_003100_0_1_9"/>
<dbReference type="OMA" id="AIHPTPV"/>
<dbReference type="OrthoDB" id="9804441at2"/>
<dbReference type="UniPathway" id="UPA00074">
    <property type="reaction ID" value="UER00128"/>
</dbReference>
<dbReference type="Proteomes" id="UP000000427">
    <property type="component" value="Chromosome"/>
</dbReference>
<dbReference type="Proteomes" id="UP000000594">
    <property type="component" value="Chromosome"/>
</dbReference>
<dbReference type="GO" id="GO:0005737">
    <property type="term" value="C:cytoplasm"/>
    <property type="evidence" value="ECO:0007669"/>
    <property type="project" value="UniProtKB-SubCell"/>
</dbReference>
<dbReference type="GO" id="GO:0005524">
    <property type="term" value="F:ATP binding"/>
    <property type="evidence" value="ECO:0007669"/>
    <property type="project" value="UniProtKB-UniRule"/>
</dbReference>
<dbReference type="GO" id="GO:0000287">
    <property type="term" value="F:magnesium ion binding"/>
    <property type="evidence" value="ECO:0007669"/>
    <property type="project" value="UniProtKB-UniRule"/>
</dbReference>
<dbReference type="GO" id="GO:0004642">
    <property type="term" value="F:phosphoribosylformylglycinamidine synthase activity"/>
    <property type="evidence" value="ECO:0007669"/>
    <property type="project" value="UniProtKB-UniRule"/>
</dbReference>
<dbReference type="GO" id="GO:0006189">
    <property type="term" value="P:'de novo' IMP biosynthetic process"/>
    <property type="evidence" value="ECO:0007669"/>
    <property type="project" value="UniProtKB-UniRule"/>
</dbReference>
<dbReference type="CDD" id="cd02203">
    <property type="entry name" value="PurL_repeat1"/>
    <property type="match status" value="1"/>
</dbReference>
<dbReference type="CDD" id="cd02204">
    <property type="entry name" value="PurL_repeat2"/>
    <property type="match status" value="1"/>
</dbReference>
<dbReference type="FunFam" id="3.30.1330.10:FF:000004">
    <property type="entry name" value="Phosphoribosylformylglycinamidine synthase subunit PurL"/>
    <property type="match status" value="1"/>
</dbReference>
<dbReference type="FunFam" id="3.30.1330.10:FF:000011">
    <property type="entry name" value="Phosphoribosylformylglycinamidine synthase subunit PurL"/>
    <property type="match status" value="1"/>
</dbReference>
<dbReference type="FunFam" id="3.90.650.10:FF:000009">
    <property type="entry name" value="Phosphoribosylformylglycinamidine synthase subunit PurL"/>
    <property type="match status" value="1"/>
</dbReference>
<dbReference type="FunFam" id="3.90.650.10:FF:000013">
    <property type="entry name" value="Phosphoribosylformylglycinamidine synthase subunit PurL"/>
    <property type="match status" value="1"/>
</dbReference>
<dbReference type="Gene3D" id="3.90.650.10">
    <property type="entry name" value="PurM-like C-terminal domain"/>
    <property type="match status" value="2"/>
</dbReference>
<dbReference type="Gene3D" id="3.30.1330.10">
    <property type="entry name" value="PurM-like, N-terminal domain"/>
    <property type="match status" value="2"/>
</dbReference>
<dbReference type="HAMAP" id="MF_00420">
    <property type="entry name" value="PurL_2"/>
    <property type="match status" value="1"/>
</dbReference>
<dbReference type="InterPro" id="IPR010074">
    <property type="entry name" value="PRibForGlyAmidine_synth_PurL"/>
</dbReference>
<dbReference type="InterPro" id="IPR041609">
    <property type="entry name" value="PurL_linker"/>
</dbReference>
<dbReference type="InterPro" id="IPR010918">
    <property type="entry name" value="PurM-like_C_dom"/>
</dbReference>
<dbReference type="InterPro" id="IPR036676">
    <property type="entry name" value="PurM-like_C_sf"/>
</dbReference>
<dbReference type="InterPro" id="IPR016188">
    <property type="entry name" value="PurM-like_N"/>
</dbReference>
<dbReference type="InterPro" id="IPR036921">
    <property type="entry name" value="PurM-like_N_sf"/>
</dbReference>
<dbReference type="NCBIfam" id="TIGR01736">
    <property type="entry name" value="FGAM_synth_II"/>
    <property type="match status" value="1"/>
</dbReference>
<dbReference type="NCBIfam" id="NF002290">
    <property type="entry name" value="PRK01213.1"/>
    <property type="match status" value="1"/>
</dbReference>
<dbReference type="PANTHER" id="PTHR43555">
    <property type="entry name" value="PHOSPHORIBOSYLFORMYLGLYCINAMIDINE SYNTHASE SUBUNIT PURL"/>
    <property type="match status" value="1"/>
</dbReference>
<dbReference type="PANTHER" id="PTHR43555:SF1">
    <property type="entry name" value="PHOSPHORIBOSYLFORMYLGLYCINAMIDINE SYNTHASE SUBUNIT PURL"/>
    <property type="match status" value="1"/>
</dbReference>
<dbReference type="Pfam" id="PF00586">
    <property type="entry name" value="AIRS"/>
    <property type="match status" value="2"/>
</dbReference>
<dbReference type="Pfam" id="PF02769">
    <property type="entry name" value="AIRS_C"/>
    <property type="match status" value="2"/>
</dbReference>
<dbReference type="Pfam" id="PF18072">
    <property type="entry name" value="FGAR-AT_linker"/>
    <property type="match status" value="1"/>
</dbReference>
<dbReference type="PIRSF" id="PIRSF001587">
    <property type="entry name" value="FGAM_synthase_II"/>
    <property type="match status" value="1"/>
</dbReference>
<dbReference type="SUPFAM" id="SSF56042">
    <property type="entry name" value="PurM C-terminal domain-like"/>
    <property type="match status" value="2"/>
</dbReference>
<dbReference type="SUPFAM" id="SSF55326">
    <property type="entry name" value="PurM N-terminal domain-like"/>
    <property type="match status" value="2"/>
</dbReference>
<reference key="1">
    <citation type="journal article" date="2003" name="Nature">
        <title>The genome sequence of Bacillus anthracis Ames and comparison to closely related bacteria.</title>
        <authorList>
            <person name="Read T.D."/>
            <person name="Peterson S.N."/>
            <person name="Tourasse N.J."/>
            <person name="Baillie L.W."/>
            <person name="Paulsen I.T."/>
            <person name="Nelson K.E."/>
            <person name="Tettelin H."/>
            <person name="Fouts D.E."/>
            <person name="Eisen J.A."/>
            <person name="Gill S.R."/>
            <person name="Holtzapple E.K."/>
            <person name="Okstad O.A."/>
            <person name="Helgason E."/>
            <person name="Rilstone J."/>
            <person name="Wu M."/>
            <person name="Kolonay J.F."/>
            <person name="Beanan M.J."/>
            <person name="Dodson R.J."/>
            <person name="Brinkac L.M."/>
            <person name="Gwinn M.L."/>
            <person name="DeBoy R.T."/>
            <person name="Madpu R."/>
            <person name="Daugherty S.C."/>
            <person name="Durkin A.S."/>
            <person name="Haft D.H."/>
            <person name="Nelson W.C."/>
            <person name="Peterson J.D."/>
            <person name="Pop M."/>
            <person name="Khouri H.M."/>
            <person name="Radune D."/>
            <person name="Benton J.L."/>
            <person name="Mahamoud Y."/>
            <person name="Jiang L."/>
            <person name="Hance I.R."/>
            <person name="Weidman J.F."/>
            <person name="Berry K.J."/>
            <person name="Plaut R.D."/>
            <person name="Wolf A.M."/>
            <person name="Watkins K.L."/>
            <person name="Nierman W.C."/>
            <person name="Hazen A."/>
            <person name="Cline R.T."/>
            <person name="Redmond C."/>
            <person name="Thwaite J.E."/>
            <person name="White O."/>
            <person name="Salzberg S.L."/>
            <person name="Thomason B."/>
            <person name="Friedlander A.M."/>
            <person name="Koehler T.M."/>
            <person name="Hanna P.C."/>
            <person name="Kolstoe A.-B."/>
            <person name="Fraser C.M."/>
        </authorList>
    </citation>
    <scope>NUCLEOTIDE SEQUENCE [LARGE SCALE GENOMIC DNA]</scope>
    <source>
        <strain>Ames / isolate Porton</strain>
    </source>
</reference>
<reference key="2">
    <citation type="journal article" date="2009" name="J. Bacteriol.">
        <title>The complete genome sequence of Bacillus anthracis Ames 'Ancestor'.</title>
        <authorList>
            <person name="Ravel J."/>
            <person name="Jiang L."/>
            <person name="Stanley S.T."/>
            <person name="Wilson M.R."/>
            <person name="Decker R.S."/>
            <person name="Read T.D."/>
            <person name="Worsham P."/>
            <person name="Keim P.S."/>
            <person name="Salzberg S.L."/>
            <person name="Fraser-Liggett C.M."/>
            <person name="Rasko D.A."/>
        </authorList>
    </citation>
    <scope>NUCLEOTIDE SEQUENCE [LARGE SCALE GENOMIC DNA]</scope>
    <source>
        <strain>Ames ancestor</strain>
    </source>
</reference>
<reference key="3">
    <citation type="submission" date="2004-01" db="EMBL/GenBank/DDBJ databases">
        <title>Complete genome sequence of Bacillus anthracis Sterne.</title>
        <authorList>
            <person name="Brettin T.S."/>
            <person name="Bruce D."/>
            <person name="Challacombe J.F."/>
            <person name="Gilna P."/>
            <person name="Han C."/>
            <person name="Hill K."/>
            <person name="Hitchcock P."/>
            <person name="Jackson P."/>
            <person name="Keim P."/>
            <person name="Longmire J."/>
            <person name="Lucas S."/>
            <person name="Okinaka R."/>
            <person name="Richardson P."/>
            <person name="Rubin E."/>
            <person name="Tice H."/>
        </authorList>
    </citation>
    <scope>NUCLEOTIDE SEQUENCE [LARGE SCALE GENOMIC DNA]</scope>
    <source>
        <strain>Sterne</strain>
    </source>
</reference>
<comment type="function">
    <text evidence="1">Part of the phosphoribosylformylglycinamidine synthase complex involved in the purines biosynthetic pathway. Catalyzes the ATP-dependent conversion of formylglycinamide ribonucleotide (FGAR) and glutamine to yield formylglycinamidine ribonucleotide (FGAM) and glutamate. The FGAM synthase complex is composed of three subunits. PurQ produces an ammonia molecule by converting glutamine to glutamate. PurL transfers the ammonia molecule to FGAR to form FGAM in an ATP-dependent manner. PurS interacts with PurQ and PurL and is thought to assist in the transfer of the ammonia molecule from PurQ to PurL.</text>
</comment>
<comment type="catalytic activity">
    <reaction evidence="1">
        <text>N(2)-formyl-N(1)-(5-phospho-beta-D-ribosyl)glycinamide + L-glutamine + ATP + H2O = 2-formamido-N(1)-(5-O-phospho-beta-D-ribosyl)acetamidine + L-glutamate + ADP + phosphate + H(+)</text>
        <dbReference type="Rhea" id="RHEA:17129"/>
        <dbReference type="ChEBI" id="CHEBI:15377"/>
        <dbReference type="ChEBI" id="CHEBI:15378"/>
        <dbReference type="ChEBI" id="CHEBI:29985"/>
        <dbReference type="ChEBI" id="CHEBI:30616"/>
        <dbReference type="ChEBI" id="CHEBI:43474"/>
        <dbReference type="ChEBI" id="CHEBI:58359"/>
        <dbReference type="ChEBI" id="CHEBI:147286"/>
        <dbReference type="ChEBI" id="CHEBI:147287"/>
        <dbReference type="ChEBI" id="CHEBI:456216"/>
        <dbReference type="EC" id="6.3.5.3"/>
    </reaction>
</comment>
<comment type="pathway">
    <text evidence="1">Purine metabolism; IMP biosynthesis via de novo pathway; 5-amino-1-(5-phospho-D-ribosyl)imidazole from N(2)-formyl-N(1)-(5-phospho-D-ribosyl)glycinamide: step 1/2.</text>
</comment>
<comment type="subunit">
    <text evidence="1">Monomer. Part of the FGAM synthase complex composed of 1 PurL, 1 PurQ and 2 PurS subunits.</text>
</comment>
<comment type="subcellular location">
    <subcellularLocation>
        <location evidence="1">Cytoplasm</location>
    </subcellularLocation>
</comment>
<comment type="similarity">
    <text evidence="1">Belongs to the FGAMS family.</text>
</comment>